<name>AMT2_ALTAL</name>
<protein>
    <recommendedName>
        <fullName evidence="7">Aldo-keto reductase AMT2</fullName>
        <ecNumber evidence="11">1.1.1.-</ecNumber>
    </recommendedName>
    <alternativeName>
        <fullName evidence="7">AM-toxin biosynthesis protein 2</fullName>
    </alternativeName>
</protein>
<dbReference type="EC" id="1.1.1.-" evidence="11"/>
<dbReference type="EMBL" id="AB525198">
    <property type="protein sequence ID" value="BAC84994.1"/>
    <property type="molecule type" value="Genomic_DNA"/>
</dbReference>
<dbReference type="EMBL" id="AB525199">
    <property type="protein sequence ID" value="BAI44761.1"/>
    <property type="molecule type" value="Genomic_DNA"/>
</dbReference>
<dbReference type="EMBL" id="AB525200">
    <property type="protein sequence ID" value="BAI44803.1"/>
    <property type="molecule type" value="Genomic_DNA"/>
</dbReference>
<dbReference type="SMR" id="Q75ZG2"/>
<dbReference type="VEuPathDB" id="FungiDB:CC77DRAFT_963664"/>
<dbReference type="GO" id="GO:0016491">
    <property type="term" value="F:oxidoreductase activity"/>
    <property type="evidence" value="ECO:0007669"/>
    <property type="project" value="UniProtKB-KW"/>
</dbReference>
<dbReference type="CDD" id="cd19079">
    <property type="entry name" value="AKR_EcYajO-like"/>
    <property type="match status" value="1"/>
</dbReference>
<dbReference type="FunFam" id="3.20.20.100:FF:000004">
    <property type="entry name" value="Oxidoreductase, aldo/keto reductase"/>
    <property type="match status" value="1"/>
</dbReference>
<dbReference type="Gene3D" id="3.20.20.100">
    <property type="entry name" value="NADP-dependent oxidoreductase domain"/>
    <property type="match status" value="1"/>
</dbReference>
<dbReference type="InterPro" id="IPR050523">
    <property type="entry name" value="AKR_Detox_Biosynth"/>
</dbReference>
<dbReference type="InterPro" id="IPR023210">
    <property type="entry name" value="NADP_OxRdtase_dom"/>
</dbReference>
<dbReference type="InterPro" id="IPR036812">
    <property type="entry name" value="NADP_OxRdtase_dom_sf"/>
</dbReference>
<dbReference type="PANTHER" id="PTHR43364">
    <property type="entry name" value="NADH-SPECIFIC METHYLGLYOXAL REDUCTASE-RELATED"/>
    <property type="match status" value="1"/>
</dbReference>
<dbReference type="PANTHER" id="PTHR43364:SF9">
    <property type="entry name" value="OXIDOREDUCTASE"/>
    <property type="match status" value="1"/>
</dbReference>
<dbReference type="Pfam" id="PF00248">
    <property type="entry name" value="Aldo_ket_red"/>
    <property type="match status" value="1"/>
</dbReference>
<dbReference type="SUPFAM" id="SSF51430">
    <property type="entry name" value="NAD(P)-linked oxidoreductase"/>
    <property type="match status" value="1"/>
</dbReference>
<comment type="function">
    <text evidence="4 5 6 8 10">Aldo-keto reductase; part of the gene clusters that mediate the biosynthesis of AM-toxins, host-selective toxins (HSTs) causing Alternaria blotch on apple, a worldwide distributed disease (PubMed:10875335, PubMed:17990954). AM-toxins are cyclic depsipeptides containing the 3 residues 2-hydroxy-isovaleric acid (2-HIV), dehydroalanine, L-alanine which are common for all 3 AM-toxins I to III. The fourth precursor is L-alpha-amino-methoxyphenyl-valeric acid (L-Amv) for AM-toxin I, L-alpha-amino-phenyl-valeric acid (L-Apv) for AM-toxin II, and L-alpha-amino-hydroxyphenyl-valeric acid (L-Ahv) for AM-toxin III (Probable). AM-toxins have two target sites for affecting susceptible apple cells; they cause invagination of the plasma membrane and electrolyte loss and chloroplast disorganization (PubMed:22846083). The non-ribosomal peptide synthetase AMT1 contains 4 catalytic modules and is responsible for activation of each residue in AM-toxin (PubMed:10875335). The aldo-keto reductase AMT2 catalyzes the conversion of 2-keto-isovaleric acid (2-KIV) to 2-hydroxy-isovaleric acid (2-HIV), one of the precursor residues incorporated by AMT1 during AM-toxin biosynthesis, by reduction of its ketone to an alcohol (PubMed:15066029). The cytochrome P450 monooxygenase AMT3 and the thioesterase AMT4 are also important for AM-toxin production, but their exact function within the AM-toxin biosynthesis are not known yet (PubMed:17990954). Up to 21 proteins (including AMT1 to AMT4) are predicted to be involved in AM-toxin biosynthesis since their expression ishighly up-regulated in AM-toxin-producing cultures (PubMed:17990954).</text>
</comment>
<comment type="pathway">
    <text evidence="5">Mycotoxin biosynthesis.</text>
</comment>
<comment type="induction">
    <text evidence="6">Expression is up-regulated more than 10 fold in toxin producing cultures.</text>
</comment>
<comment type="miscellaneous">
    <text evidence="6">Gene clusters encoding host-selective toxins (HSTs) are localized on conditionally dispensable chromosomes (CDCs), also called supernumerary chromosomes, where they are present in multiple copies (PubMed:17990954). The CDCs are not essential for saprophytic growth but controls host-selective pathogenicity (PubMed:17990954).</text>
</comment>
<comment type="similarity">
    <text evidence="9">Belongs to the aldo/keto reductase family.</text>
</comment>
<gene>
    <name evidence="7" type="primary">AMT2</name>
</gene>
<proteinExistence type="evidence at transcript level"/>
<accession>Q75ZG2</accession>
<organism>
    <name type="scientific">Alternaria alternata</name>
    <name type="common">Alternaria rot fungus</name>
    <name type="synonym">Torula alternata</name>
    <dbReference type="NCBI Taxonomy" id="5599"/>
    <lineage>
        <taxon>Eukaryota</taxon>
        <taxon>Fungi</taxon>
        <taxon>Dikarya</taxon>
        <taxon>Ascomycota</taxon>
        <taxon>Pezizomycotina</taxon>
        <taxon>Dothideomycetes</taxon>
        <taxon>Pleosporomycetidae</taxon>
        <taxon>Pleosporales</taxon>
        <taxon>Pleosporineae</taxon>
        <taxon>Pleosporaceae</taxon>
        <taxon>Alternaria</taxon>
        <taxon>Alternaria sect. Alternaria</taxon>
        <taxon>Alternaria alternata complex</taxon>
    </lineage>
</organism>
<evidence type="ECO:0000250" key="1">
    <source>
        <dbReference type="UniProtKB" id="O43488"/>
    </source>
</evidence>
<evidence type="ECO:0000250" key="2">
    <source>
        <dbReference type="UniProtKB" id="Q8CG76"/>
    </source>
</evidence>
<evidence type="ECO:0000256" key="3">
    <source>
        <dbReference type="SAM" id="MobiDB-lite"/>
    </source>
</evidence>
<evidence type="ECO:0000269" key="4">
    <source>
    </source>
</evidence>
<evidence type="ECO:0000269" key="5">
    <source>
    </source>
</evidence>
<evidence type="ECO:0000269" key="6">
    <source>
    </source>
</evidence>
<evidence type="ECO:0000303" key="7">
    <source>
    </source>
</evidence>
<evidence type="ECO:0000303" key="8">
    <source>
    </source>
</evidence>
<evidence type="ECO:0000305" key="9"/>
<evidence type="ECO:0000305" key="10">
    <source>
    </source>
</evidence>
<evidence type="ECO:0000305" key="11">
    <source>
    </source>
</evidence>
<keyword id="KW-0521">NADP</keyword>
<keyword id="KW-0560">Oxidoreductase</keyword>
<keyword id="KW-0843">Virulence</keyword>
<sequence length="367" mass="41496">MLNYKKWTQPPNSLIKSIKASRAAYRRLGNSGLLVSNPILGGMHIGDPRWYDWVLDEKDSIALLKAAYDRGINTWDTANIYSNGESERIMGRALRSHNIPRSKVVIMTKCFRAVTDPDVDGDIGSSTAFFPDLTRQSKDYVNHCGLSRASVFQQVEASLRRLNTDYIDVLHIHRFDHHVPPEETMKALHDLVQMNKVRYLGASSMWAHEFAILQHTAEKNNWTKFVSMQNHYNLLYREEEREMIKYCNLTGVGLIPWGPLAAGKLARPPDGKASTFRAINGGAYKDHNPAESEQIARRVHQIAVSRGVPMSHVALAWLNKRVVSPVIGLSSVERMDEVLDARALELSDEEESRLEDPYKAQPPQGHS</sequence>
<feature type="chain" id="PRO_0000444816" description="Aldo-keto reductase AMT2">
    <location>
        <begin position="1"/>
        <end position="367"/>
    </location>
</feature>
<feature type="region of interest" description="Disordered" evidence="3">
    <location>
        <begin position="346"/>
        <end position="367"/>
    </location>
</feature>
<feature type="active site" description="Proton donor" evidence="2">
    <location>
        <position position="81"/>
    </location>
</feature>
<feature type="binding site" evidence="1">
    <location>
        <position position="76"/>
    </location>
    <ligand>
        <name>NADP(+)</name>
        <dbReference type="ChEBI" id="CHEBI:58349"/>
    </ligand>
</feature>
<feature type="binding site" evidence="2">
    <location>
        <position position="173"/>
    </location>
    <ligand>
        <name>substrate</name>
    </ligand>
</feature>
<feature type="binding site" evidence="1">
    <location>
        <begin position="203"/>
        <end position="204"/>
    </location>
    <ligand>
        <name>NADP(+)</name>
        <dbReference type="ChEBI" id="CHEBI:58349"/>
    </ligand>
</feature>
<feature type="binding site" evidence="1">
    <location>
        <position position="229"/>
    </location>
    <ligand>
        <name>NADP(+)</name>
        <dbReference type="ChEBI" id="CHEBI:58349"/>
    </ligand>
</feature>
<feature type="binding site" evidence="1">
    <location>
        <begin position="258"/>
        <end position="268"/>
    </location>
    <ligand>
        <name>NADP(+)</name>
        <dbReference type="ChEBI" id="CHEBI:58349"/>
    </ligand>
</feature>
<feature type="binding site" evidence="1">
    <location>
        <begin position="330"/>
        <end position="338"/>
    </location>
    <ligand>
        <name>NADP(+)</name>
        <dbReference type="ChEBI" id="CHEBI:58349"/>
    </ligand>
</feature>
<reference key="1">
    <citation type="journal article" date="2004" name="Mol. Microbiol.">
        <title>Dissection of the host range of the fungal plant pathogen Alternaria alternata by modification of secondary metabolism.</title>
        <authorList>
            <person name="Ito K."/>
            <person name="Tanaka T."/>
            <person name="Hatta R."/>
            <person name="Yamamoto M."/>
            <person name="Akimitsu K."/>
            <person name="Tsuge T."/>
        </authorList>
    </citation>
    <scope>NUCLEOTIDE SEQUENCE [GENOMIC DNA]</scope>
    <scope>FUNCTION</scope>
    <scope>PATHWAY</scope>
    <source>
        <strain>NBRC 8984</strain>
    </source>
</reference>
<reference key="2">
    <citation type="journal article" date="2007" name="Mol. Plant Microbe Interact.">
        <title>Expression profiles of genes encoded by the supernumerary chromosome controlling AM-toxin biosynthesis and pathogenicity in the apple pathotype of Alternaria alternata.</title>
        <authorList>
            <person name="Harimoto Y."/>
            <person name="Hatta R."/>
            <person name="Kodama M."/>
            <person name="Yamamoto M."/>
            <person name="Otani H."/>
            <person name="Tsuge T."/>
        </authorList>
    </citation>
    <scope>NUCLEOTIDE SEQUENCE [GENOMIC DNA]</scope>
    <scope>FUNCTION</scope>
    <scope>INDUCTION</scope>
    <source>
        <strain>NBRC 8984</strain>
    </source>
</reference>
<reference key="3">
    <citation type="journal article" date="2000" name="Mol. Plant Microbe Interact.">
        <title>Cloning and characterization of a cyclic peptide synthetase gene from Alternaria alternata apple pathotype whose product is involved in AM-toxin synthesis and pathogenicity.</title>
        <authorList>
            <person name="Johnson R.D."/>
            <person name="Johnson L."/>
            <person name="Itoh Y."/>
            <person name="Kodama M."/>
            <person name="Otani H."/>
            <person name="Kohmoto K."/>
        </authorList>
    </citation>
    <scope>FUNCTION</scope>
    <source>
        <strain>M-71</strain>
    </source>
</reference>
<reference key="4">
    <citation type="journal article" date="2013" name="FEMS Microbiol. Rev.">
        <title>Host-selective toxins produced by the plant pathogenic fungus Alternaria alternata.</title>
        <authorList>
            <person name="Tsuge T."/>
            <person name="Harimoto Y."/>
            <person name="Akimitsu K."/>
            <person name="Ohtani K."/>
            <person name="Kodama M."/>
            <person name="Akagi Y."/>
            <person name="Egusa M."/>
            <person name="Yamamoto M."/>
            <person name="Otani H."/>
        </authorList>
    </citation>
    <scope>REVIEW ON HOST-SELECTIVE TOXINS</scope>
</reference>